<accession>Q8XWB0</accession>
<protein>
    <recommendedName>
        <fullName evidence="1">tRNA dimethylallyltransferase</fullName>
        <ecNumber evidence="1">2.5.1.75</ecNumber>
    </recommendedName>
    <alternativeName>
        <fullName evidence="1">Dimethylallyl diphosphate:tRNA dimethylallyltransferase</fullName>
        <shortName evidence="1">DMAPP:tRNA dimethylallyltransferase</shortName>
        <shortName evidence="1">DMATase</shortName>
    </alternativeName>
    <alternativeName>
        <fullName evidence="1">Isopentenyl-diphosphate:tRNA isopentenyltransferase</fullName>
        <shortName evidence="1">IPP transferase</shortName>
        <shortName evidence="1">IPPT</shortName>
        <shortName evidence="1">IPTase</shortName>
    </alternativeName>
</protein>
<evidence type="ECO:0000255" key="1">
    <source>
        <dbReference type="HAMAP-Rule" id="MF_00185"/>
    </source>
</evidence>
<feature type="chain" id="PRO_0000163960" description="tRNA dimethylallyltransferase">
    <location>
        <begin position="1"/>
        <end position="323"/>
    </location>
</feature>
<feature type="region of interest" description="Interaction with substrate tRNA" evidence="1">
    <location>
        <begin position="41"/>
        <end position="44"/>
    </location>
</feature>
<feature type="region of interest" description="Interaction with substrate tRNA" evidence="1">
    <location>
        <begin position="165"/>
        <end position="169"/>
    </location>
</feature>
<feature type="region of interest" description="Interaction with substrate tRNA" evidence="1">
    <location>
        <begin position="253"/>
        <end position="258"/>
    </location>
</feature>
<feature type="region of interest" description="Interaction with substrate tRNA" evidence="1">
    <location>
        <begin position="286"/>
        <end position="293"/>
    </location>
</feature>
<feature type="binding site" evidence="1">
    <location>
        <begin position="16"/>
        <end position="23"/>
    </location>
    <ligand>
        <name>ATP</name>
        <dbReference type="ChEBI" id="CHEBI:30616"/>
    </ligand>
</feature>
<feature type="binding site" evidence="1">
    <location>
        <begin position="18"/>
        <end position="23"/>
    </location>
    <ligand>
        <name>substrate</name>
    </ligand>
</feature>
<feature type="site" description="Interaction with substrate tRNA" evidence="1">
    <location>
        <position position="107"/>
    </location>
</feature>
<feature type="site" description="Interaction with substrate tRNA" evidence="1">
    <location>
        <position position="129"/>
    </location>
</feature>
<name>MIAA_RALN1</name>
<reference key="1">
    <citation type="journal article" date="2002" name="Nature">
        <title>Genome sequence of the plant pathogen Ralstonia solanacearum.</title>
        <authorList>
            <person name="Salanoubat M."/>
            <person name="Genin S."/>
            <person name="Artiguenave F."/>
            <person name="Gouzy J."/>
            <person name="Mangenot S."/>
            <person name="Arlat M."/>
            <person name="Billault A."/>
            <person name="Brottier P."/>
            <person name="Camus J.-C."/>
            <person name="Cattolico L."/>
            <person name="Chandler M."/>
            <person name="Choisne N."/>
            <person name="Claudel-Renard C."/>
            <person name="Cunnac S."/>
            <person name="Demange N."/>
            <person name="Gaspin C."/>
            <person name="Lavie M."/>
            <person name="Moisan A."/>
            <person name="Robert C."/>
            <person name="Saurin W."/>
            <person name="Schiex T."/>
            <person name="Siguier P."/>
            <person name="Thebault P."/>
            <person name="Whalen M."/>
            <person name="Wincker P."/>
            <person name="Levy M."/>
            <person name="Weissenbach J."/>
            <person name="Boucher C.A."/>
        </authorList>
    </citation>
    <scope>NUCLEOTIDE SEQUENCE [LARGE SCALE GENOMIC DNA]</scope>
    <source>
        <strain>ATCC BAA-1114 / GMI1000</strain>
    </source>
</reference>
<gene>
    <name evidence="1" type="primary">miaA</name>
    <name type="ordered locus">RSc2564</name>
    <name type="ORF">RS00755</name>
</gene>
<keyword id="KW-0067">ATP-binding</keyword>
<keyword id="KW-0460">Magnesium</keyword>
<keyword id="KW-0547">Nucleotide-binding</keyword>
<keyword id="KW-1185">Reference proteome</keyword>
<keyword id="KW-0808">Transferase</keyword>
<keyword id="KW-0819">tRNA processing</keyword>
<organism>
    <name type="scientific">Ralstonia nicotianae (strain ATCC BAA-1114 / GMI1000)</name>
    <name type="common">Ralstonia solanacearum</name>
    <dbReference type="NCBI Taxonomy" id="267608"/>
    <lineage>
        <taxon>Bacteria</taxon>
        <taxon>Pseudomonadati</taxon>
        <taxon>Pseudomonadota</taxon>
        <taxon>Betaproteobacteria</taxon>
        <taxon>Burkholderiales</taxon>
        <taxon>Burkholderiaceae</taxon>
        <taxon>Ralstonia</taxon>
        <taxon>Ralstonia solanacearum species complex</taxon>
    </lineage>
</organism>
<dbReference type="EC" id="2.5.1.75" evidence="1"/>
<dbReference type="EMBL" id="AL646052">
    <property type="protein sequence ID" value="CAD16271.1"/>
    <property type="molecule type" value="Genomic_DNA"/>
</dbReference>
<dbReference type="RefSeq" id="WP_011002479.1">
    <property type="nucleotide sequence ID" value="NC_003295.1"/>
</dbReference>
<dbReference type="SMR" id="Q8XWB0"/>
<dbReference type="STRING" id="267608.RSc2564"/>
<dbReference type="EnsemblBacteria" id="CAD16271">
    <property type="protein sequence ID" value="CAD16271"/>
    <property type="gene ID" value="RSc2564"/>
</dbReference>
<dbReference type="KEGG" id="rso:RSc2564"/>
<dbReference type="eggNOG" id="COG0324">
    <property type="taxonomic scope" value="Bacteria"/>
</dbReference>
<dbReference type="HOGENOM" id="CLU_032616_0_0_4"/>
<dbReference type="Proteomes" id="UP000001436">
    <property type="component" value="Chromosome"/>
</dbReference>
<dbReference type="GO" id="GO:0005524">
    <property type="term" value="F:ATP binding"/>
    <property type="evidence" value="ECO:0007669"/>
    <property type="project" value="UniProtKB-UniRule"/>
</dbReference>
<dbReference type="GO" id="GO:0052381">
    <property type="term" value="F:tRNA dimethylallyltransferase activity"/>
    <property type="evidence" value="ECO:0007669"/>
    <property type="project" value="UniProtKB-UniRule"/>
</dbReference>
<dbReference type="GO" id="GO:0006400">
    <property type="term" value="P:tRNA modification"/>
    <property type="evidence" value="ECO:0007669"/>
    <property type="project" value="TreeGrafter"/>
</dbReference>
<dbReference type="FunFam" id="1.10.20.140:FF:000001">
    <property type="entry name" value="tRNA dimethylallyltransferase"/>
    <property type="match status" value="1"/>
</dbReference>
<dbReference type="Gene3D" id="1.10.20.140">
    <property type="match status" value="1"/>
</dbReference>
<dbReference type="Gene3D" id="3.40.50.300">
    <property type="entry name" value="P-loop containing nucleotide triphosphate hydrolases"/>
    <property type="match status" value="1"/>
</dbReference>
<dbReference type="HAMAP" id="MF_00185">
    <property type="entry name" value="IPP_trans"/>
    <property type="match status" value="1"/>
</dbReference>
<dbReference type="InterPro" id="IPR039657">
    <property type="entry name" value="Dimethylallyltransferase"/>
</dbReference>
<dbReference type="InterPro" id="IPR018022">
    <property type="entry name" value="IPT"/>
</dbReference>
<dbReference type="InterPro" id="IPR027417">
    <property type="entry name" value="P-loop_NTPase"/>
</dbReference>
<dbReference type="NCBIfam" id="TIGR00174">
    <property type="entry name" value="miaA"/>
    <property type="match status" value="1"/>
</dbReference>
<dbReference type="PANTHER" id="PTHR11088">
    <property type="entry name" value="TRNA DIMETHYLALLYLTRANSFERASE"/>
    <property type="match status" value="1"/>
</dbReference>
<dbReference type="PANTHER" id="PTHR11088:SF60">
    <property type="entry name" value="TRNA DIMETHYLALLYLTRANSFERASE"/>
    <property type="match status" value="1"/>
</dbReference>
<dbReference type="Pfam" id="PF01715">
    <property type="entry name" value="IPPT"/>
    <property type="match status" value="1"/>
</dbReference>
<dbReference type="SUPFAM" id="SSF52540">
    <property type="entry name" value="P-loop containing nucleoside triphosphate hydrolases"/>
    <property type="match status" value="1"/>
</dbReference>
<comment type="function">
    <text evidence="1">Catalyzes the transfer of a dimethylallyl group onto the adenine at position 37 in tRNAs that read codons beginning with uridine, leading to the formation of N6-(dimethylallyl)adenosine (i(6)A).</text>
</comment>
<comment type="catalytic activity">
    <reaction evidence="1">
        <text>adenosine(37) in tRNA + dimethylallyl diphosphate = N(6)-dimethylallyladenosine(37) in tRNA + diphosphate</text>
        <dbReference type="Rhea" id="RHEA:26482"/>
        <dbReference type="Rhea" id="RHEA-COMP:10162"/>
        <dbReference type="Rhea" id="RHEA-COMP:10375"/>
        <dbReference type="ChEBI" id="CHEBI:33019"/>
        <dbReference type="ChEBI" id="CHEBI:57623"/>
        <dbReference type="ChEBI" id="CHEBI:74411"/>
        <dbReference type="ChEBI" id="CHEBI:74415"/>
        <dbReference type="EC" id="2.5.1.75"/>
    </reaction>
</comment>
<comment type="cofactor">
    <cofactor evidence="1">
        <name>Mg(2+)</name>
        <dbReference type="ChEBI" id="CHEBI:18420"/>
    </cofactor>
</comment>
<comment type="subunit">
    <text evidence="1">Monomer.</text>
</comment>
<comment type="similarity">
    <text evidence="1">Belongs to the IPP transferase family.</text>
</comment>
<sequence length="323" mass="34966">MTAAPHTAPRAVCLLGPTASGKTAAALALAERWPVEIISMDSALVYRDMDIGTAKPSRAEQAIAPHHLIDIIDPLDAYSAAQFATDAQALIEAIRARGRLPLIVGGTMLYYKALTQGLSDLPGADPAIRAEIDAEAARDGWPALHAKLAQVDPVTAARLHATDAQRIQRALELYRLTGQPMSALLAREAGAAAFHRHEAAAAYLSIALEPADRAVLHARIAQRFDAMLAGGLLDEVEALRRRGDLSPVLPSIRCVGYRQAWAYLDGEIDMATLREQGIAATRQLCKRQITWLRSTPERRVVDCLAPDYVDQVARLVRNALETP</sequence>
<proteinExistence type="inferred from homology"/>